<protein>
    <recommendedName>
        <fullName evidence="1">Arginine--tRNA ligase</fullName>
        <ecNumber evidence="1">6.1.1.19</ecNumber>
    </recommendedName>
    <alternativeName>
        <fullName evidence="1">Arginyl-tRNA synthetase</fullName>
        <shortName evidence="1">ArgRS</shortName>
    </alternativeName>
</protein>
<name>SYR_DESPS</name>
<sequence>MIRSQLKELLDRCFQEGVDNGSWSDRGAGKYTVELPKHEGQGDFSTNIALVLAGIEKRNPRELAGIVAEKLGLETAIVAGVEIAGPGFVNITIQPAVWHGVLAEVFSAGENFGRSQVGAGRKVMVEFVSANPTGPLSIGHGRQAILGDSIARLLEATNHDVFREYYYNNAGRQMRVLGESTRARYLELIGAEFSFPEDGYQGEYIIDIAQSLVDEHGEKLKDEPDVEPFKDQAEKAIFKDISGTLERMGIHFDNYYNERSLYENGHIDSVVQELRDKGLVYEKDDAVWFETTKLGQEKDRVIIKSTGEPTYRLPDIAYHREKFKRNFDWLIDIFGSDHIATVPDVLSGVEALGYDASKVTVLLHQFVTLTRDGKQVKMSTRKANFVTVDELIDVVGEDVLRFFYMLRKADSQLEFDLDLATSQSQDNPVYYVQYAHARLCSILAQSGERGIVPAEVGSSLLQRLQEPEELALLKTLSGFPAAIEGSALDLAPHKFIHYLMEFAGQFHSYYNKHKVITEDLELSQARLCLIQALQLTLQNGLHIIGLTAPKSM</sequence>
<comment type="catalytic activity">
    <reaction evidence="1">
        <text>tRNA(Arg) + L-arginine + ATP = L-arginyl-tRNA(Arg) + AMP + diphosphate</text>
        <dbReference type="Rhea" id="RHEA:20301"/>
        <dbReference type="Rhea" id="RHEA-COMP:9658"/>
        <dbReference type="Rhea" id="RHEA-COMP:9673"/>
        <dbReference type="ChEBI" id="CHEBI:30616"/>
        <dbReference type="ChEBI" id="CHEBI:32682"/>
        <dbReference type="ChEBI" id="CHEBI:33019"/>
        <dbReference type="ChEBI" id="CHEBI:78442"/>
        <dbReference type="ChEBI" id="CHEBI:78513"/>
        <dbReference type="ChEBI" id="CHEBI:456215"/>
        <dbReference type="EC" id="6.1.1.19"/>
    </reaction>
</comment>
<comment type="subunit">
    <text evidence="1">Monomer.</text>
</comment>
<comment type="subcellular location">
    <subcellularLocation>
        <location evidence="1">Cytoplasm</location>
    </subcellularLocation>
</comment>
<comment type="similarity">
    <text evidence="1">Belongs to the class-I aminoacyl-tRNA synthetase family.</text>
</comment>
<gene>
    <name evidence="1" type="primary">argS</name>
    <name type="ordered locus">DP2752</name>
</gene>
<reference key="1">
    <citation type="journal article" date="2004" name="Environ. Microbiol.">
        <title>The genome of Desulfotalea psychrophila, a sulfate-reducing bacterium from permanently cold Arctic sediments.</title>
        <authorList>
            <person name="Rabus R."/>
            <person name="Ruepp A."/>
            <person name="Frickey T."/>
            <person name="Rattei T."/>
            <person name="Fartmann B."/>
            <person name="Stark M."/>
            <person name="Bauer M."/>
            <person name="Zibat A."/>
            <person name="Lombardot T."/>
            <person name="Becker I."/>
            <person name="Amann J."/>
            <person name="Gellner K."/>
            <person name="Teeling H."/>
            <person name="Leuschner W.D."/>
            <person name="Gloeckner F.-O."/>
            <person name="Lupas A.N."/>
            <person name="Amann R."/>
            <person name="Klenk H.-P."/>
        </authorList>
    </citation>
    <scope>NUCLEOTIDE SEQUENCE [LARGE SCALE GENOMIC DNA]</scope>
    <source>
        <strain>DSM 12343 / LSv54</strain>
    </source>
</reference>
<evidence type="ECO:0000255" key="1">
    <source>
        <dbReference type="HAMAP-Rule" id="MF_00123"/>
    </source>
</evidence>
<organism>
    <name type="scientific">Desulfotalea psychrophila (strain LSv54 / DSM 12343)</name>
    <dbReference type="NCBI Taxonomy" id="177439"/>
    <lineage>
        <taxon>Bacteria</taxon>
        <taxon>Pseudomonadati</taxon>
        <taxon>Thermodesulfobacteriota</taxon>
        <taxon>Desulfobulbia</taxon>
        <taxon>Desulfobulbales</taxon>
        <taxon>Desulfocapsaceae</taxon>
        <taxon>Desulfotalea</taxon>
    </lineage>
</organism>
<keyword id="KW-0030">Aminoacyl-tRNA synthetase</keyword>
<keyword id="KW-0067">ATP-binding</keyword>
<keyword id="KW-0963">Cytoplasm</keyword>
<keyword id="KW-0436">Ligase</keyword>
<keyword id="KW-0547">Nucleotide-binding</keyword>
<keyword id="KW-0648">Protein biosynthesis</keyword>
<keyword id="KW-1185">Reference proteome</keyword>
<accession>Q6AJJ9</accession>
<proteinExistence type="inferred from homology"/>
<feature type="chain" id="PRO_0000242014" description="Arginine--tRNA ligase">
    <location>
        <begin position="1"/>
        <end position="552"/>
    </location>
</feature>
<feature type="short sequence motif" description="'HIGH' region">
    <location>
        <begin position="130"/>
        <end position="140"/>
    </location>
</feature>
<dbReference type="EC" id="6.1.1.19" evidence="1"/>
<dbReference type="EMBL" id="CR522870">
    <property type="protein sequence ID" value="CAG37481.1"/>
    <property type="molecule type" value="Genomic_DNA"/>
</dbReference>
<dbReference type="RefSeq" id="WP_011189993.1">
    <property type="nucleotide sequence ID" value="NC_006138.1"/>
</dbReference>
<dbReference type="SMR" id="Q6AJJ9"/>
<dbReference type="STRING" id="177439.DP2752"/>
<dbReference type="KEGG" id="dps:DP2752"/>
<dbReference type="eggNOG" id="COG0018">
    <property type="taxonomic scope" value="Bacteria"/>
</dbReference>
<dbReference type="HOGENOM" id="CLU_006406_0_1_7"/>
<dbReference type="OrthoDB" id="9803211at2"/>
<dbReference type="Proteomes" id="UP000000602">
    <property type="component" value="Chromosome"/>
</dbReference>
<dbReference type="GO" id="GO:0005737">
    <property type="term" value="C:cytoplasm"/>
    <property type="evidence" value="ECO:0007669"/>
    <property type="project" value="UniProtKB-SubCell"/>
</dbReference>
<dbReference type="GO" id="GO:0004814">
    <property type="term" value="F:arginine-tRNA ligase activity"/>
    <property type="evidence" value="ECO:0007669"/>
    <property type="project" value="UniProtKB-UniRule"/>
</dbReference>
<dbReference type="GO" id="GO:0005524">
    <property type="term" value="F:ATP binding"/>
    <property type="evidence" value="ECO:0007669"/>
    <property type="project" value="UniProtKB-UniRule"/>
</dbReference>
<dbReference type="GO" id="GO:0006420">
    <property type="term" value="P:arginyl-tRNA aminoacylation"/>
    <property type="evidence" value="ECO:0007669"/>
    <property type="project" value="UniProtKB-UniRule"/>
</dbReference>
<dbReference type="CDD" id="cd00671">
    <property type="entry name" value="ArgRS_core"/>
    <property type="match status" value="1"/>
</dbReference>
<dbReference type="FunFam" id="1.10.730.10:FF:000008">
    <property type="entry name" value="Arginine--tRNA ligase"/>
    <property type="match status" value="1"/>
</dbReference>
<dbReference type="FunFam" id="3.40.50.620:FF:000062">
    <property type="entry name" value="Arginine--tRNA ligase"/>
    <property type="match status" value="1"/>
</dbReference>
<dbReference type="Gene3D" id="3.30.1360.70">
    <property type="entry name" value="Arginyl tRNA synthetase N-terminal domain"/>
    <property type="match status" value="1"/>
</dbReference>
<dbReference type="Gene3D" id="3.40.50.620">
    <property type="entry name" value="HUPs"/>
    <property type="match status" value="1"/>
</dbReference>
<dbReference type="Gene3D" id="1.10.730.10">
    <property type="entry name" value="Isoleucyl-tRNA Synthetase, Domain 1"/>
    <property type="match status" value="1"/>
</dbReference>
<dbReference type="HAMAP" id="MF_00123">
    <property type="entry name" value="Arg_tRNA_synth"/>
    <property type="match status" value="1"/>
</dbReference>
<dbReference type="InterPro" id="IPR001278">
    <property type="entry name" value="Arg-tRNA-ligase"/>
</dbReference>
<dbReference type="InterPro" id="IPR005148">
    <property type="entry name" value="Arg-tRNA-synth_N"/>
</dbReference>
<dbReference type="InterPro" id="IPR036695">
    <property type="entry name" value="Arg-tRNA-synth_N_sf"/>
</dbReference>
<dbReference type="InterPro" id="IPR035684">
    <property type="entry name" value="ArgRS_core"/>
</dbReference>
<dbReference type="InterPro" id="IPR008909">
    <property type="entry name" value="DALR_anticod-bd"/>
</dbReference>
<dbReference type="InterPro" id="IPR014729">
    <property type="entry name" value="Rossmann-like_a/b/a_fold"/>
</dbReference>
<dbReference type="InterPro" id="IPR009080">
    <property type="entry name" value="tRNAsynth_Ia_anticodon-bd"/>
</dbReference>
<dbReference type="NCBIfam" id="TIGR00456">
    <property type="entry name" value="argS"/>
    <property type="match status" value="1"/>
</dbReference>
<dbReference type="PANTHER" id="PTHR11956:SF5">
    <property type="entry name" value="ARGININE--TRNA LIGASE, CYTOPLASMIC"/>
    <property type="match status" value="1"/>
</dbReference>
<dbReference type="PANTHER" id="PTHR11956">
    <property type="entry name" value="ARGINYL-TRNA SYNTHETASE"/>
    <property type="match status" value="1"/>
</dbReference>
<dbReference type="Pfam" id="PF03485">
    <property type="entry name" value="Arg_tRNA_synt_N"/>
    <property type="match status" value="1"/>
</dbReference>
<dbReference type="Pfam" id="PF05746">
    <property type="entry name" value="DALR_1"/>
    <property type="match status" value="1"/>
</dbReference>
<dbReference type="Pfam" id="PF00750">
    <property type="entry name" value="tRNA-synt_1d"/>
    <property type="match status" value="1"/>
</dbReference>
<dbReference type="PRINTS" id="PR01038">
    <property type="entry name" value="TRNASYNTHARG"/>
</dbReference>
<dbReference type="SMART" id="SM01016">
    <property type="entry name" value="Arg_tRNA_synt_N"/>
    <property type="match status" value="1"/>
</dbReference>
<dbReference type="SMART" id="SM00836">
    <property type="entry name" value="DALR_1"/>
    <property type="match status" value="1"/>
</dbReference>
<dbReference type="SUPFAM" id="SSF47323">
    <property type="entry name" value="Anticodon-binding domain of a subclass of class I aminoacyl-tRNA synthetases"/>
    <property type="match status" value="1"/>
</dbReference>
<dbReference type="SUPFAM" id="SSF55190">
    <property type="entry name" value="Arginyl-tRNA synthetase (ArgRS), N-terminal 'additional' domain"/>
    <property type="match status" value="1"/>
</dbReference>
<dbReference type="SUPFAM" id="SSF52374">
    <property type="entry name" value="Nucleotidylyl transferase"/>
    <property type="match status" value="1"/>
</dbReference>